<proteinExistence type="inferred from homology"/>
<organism>
    <name type="scientific">Aliivibrio fischeri (strain ATCC 700601 / ES114)</name>
    <name type="common">Vibrio fischeri</name>
    <dbReference type="NCBI Taxonomy" id="312309"/>
    <lineage>
        <taxon>Bacteria</taxon>
        <taxon>Pseudomonadati</taxon>
        <taxon>Pseudomonadota</taxon>
        <taxon>Gammaproteobacteria</taxon>
        <taxon>Vibrionales</taxon>
        <taxon>Vibrionaceae</taxon>
        <taxon>Aliivibrio</taxon>
    </lineage>
</organism>
<accession>Q5E3U6</accession>
<feature type="chain" id="PRO_0000140673" description="Chorismate synthase">
    <location>
        <begin position="1"/>
        <end position="361"/>
    </location>
</feature>
<feature type="binding site" evidence="1">
    <location>
        <position position="48"/>
    </location>
    <ligand>
        <name>NADP(+)</name>
        <dbReference type="ChEBI" id="CHEBI:58349"/>
    </ligand>
</feature>
<feature type="binding site" evidence="1">
    <location>
        <begin position="125"/>
        <end position="127"/>
    </location>
    <ligand>
        <name>FMN</name>
        <dbReference type="ChEBI" id="CHEBI:58210"/>
    </ligand>
</feature>
<feature type="binding site" evidence="1">
    <location>
        <begin position="238"/>
        <end position="239"/>
    </location>
    <ligand>
        <name>FMN</name>
        <dbReference type="ChEBI" id="CHEBI:58210"/>
    </ligand>
</feature>
<feature type="binding site" evidence="1">
    <location>
        <position position="278"/>
    </location>
    <ligand>
        <name>FMN</name>
        <dbReference type="ChEBI" id="CHEBI:58210"/>
    </ligand>
</feature>
<feature type="binding site" evidence="1">
    <location>
        <begin position="293"/>
        <end position="297"/>
    </location>
    <ligand>
        <name>FMN</name>
        <dbReference type="ChEBI" id="CHEBI:58210"/>
    </ligand>
</feature>
<feature type="binding site" evidence="1">
    <location>
        <position position="319"/>
    </location>
    <ligand>
        <name>FMN</name>
        <dbReference type="ChEBI" id="CHEBI:58210"/>
    </ligand>
</feature>
<protein>
    <recommendedName>
        <fullName evidence="1">Chorismate synthase</fullName>
        <shortName evidence="1">CS</shortName>
        <ecNumber evidence="1">4.2.3.5</ecNumber>
    </recommendedName>
    <alternativeName>
        <fullName evidence="1">5-enolpyruvylshikimate-3-phosphate phospholyase</fullName>
    </alternativeName>
</protein>
<name>AROC_ALIF1</name>
<sequence>MAGNSIGQHFRVTTFGESHGLALGCIVDGCPPGLELTEADLQVDLDRRKPGTSKYTTQRREADEVKILSGVFEGKTTGTSIGLLIENTDQRSKDYSEIKDKFRPGHADYTYHQKYGQRDYRGGGRSSARETAMRVAAGAVAKKYLKQEFGIEIRAYLSQMGDVSIDSVDWNEIENNAFFCPDASKVDAFDELIRKLKKEGDSIGAKITVVAQGVPVGLGEPVFDRLDADVAHALMGINAVKGVEIGDGFEVVNQRGSEHRDPLTPEGFSSNHAGGILGGISSGQDIVAHIALKPTSSITVPGETITRSGEKTELITKGRHDPCVGIRAVPIAEAMLAIVVMDHLVRHRGQNFGVQTETPKI</sequence>
<keyword id="KW-0028">Amino-acid biosynthesis</keyword>
<keyword id="KW-0057">Aromatic amino acid biosynthesis</keyword>
<keyword id="KW-0274">FAD</keyword>
<keyword id="KW-0285">Flavoprotein</keyword>
<keyword id="KW-0288">FMN</keyword>
<keyword id="KW-0456">Lyase</keyword>
<keyword id="KW-0521">NADP</keyword>
<keyword id="KW-1185">Reference proteome</keyword>
<evidence type="ECO:0000255" key="1">
    <source>
        <dbReference type="HAMAP-Rule" id="MF_00300"/>
    </source>
</evidence>
<reference key="1">
    <citation type="journal article" date="2005" name="Proc. Natl. Acad. Sci. U.S.A.">
        <title>Complete genome sequence of Vibrio fischeri: a symbiotic bacterium with pathogenic congeners.</title>
        <authorList>
            <person name="Ruby E.G."/>
            <person name="Urbanowski M."/>
            <person name="Campbell J."/>
            <person name="Dunn A."/>
            <person name="Faini M."/>
            <person name="Gunsalus R."/>
            <person name="Lostroh P."/>
            <person name="Lupp C."/>
            <person name="McCann J."/>
            <person name="Millikan D."/>
            <person name="Schaefer A."/>
            <person name="Stabb E."/>
            <person name="Stevens A."/>
            <person name="Visick K."/>
            <person name="Whistler C."/>
            <person name="Greenberg E.P."/>
        </authorList>
    </citation>
    <scope>NUCLEOTIDE SEQUENCE [LARGE SCALE GENOMIC DNA]</scope>
    <source>
        <strain>ATCC 700601 / ES114</strain>
    </source>
</reference>
<dbReference type="EC" id="4.2.3.5" evidence="1"/>
<dbReference type="EMBL" id="CP000020">
    <property type="protein sequence ID" value="AAW86300.1"/>
    <property type="molecule type" value="Genomic_DNA"/>
</dbReference>
<dbReference type="RefSeq" id="WP_011262335.1">
    <property type="nucleotide sequence ID" value="NZ_CAWLES010000001.1"/>
</dbReference>
<dbReference type="RefSeq" id="YP_205188.1">
    <property type="nucleotide sequence ID" value="NC_006840.2"/>
</dbReference>
<dbReference type="SMR" id="Q5E3U6"/>
<dbReference type="STRING" id="312309.VF_1805"/>
<dbReference type="EnsemblBacteria" id="AAW86300">
    <property type="protein sequence ID" value="AAW86300"/>
    <property type="gene ID" value="VF_1805"/>
</dbReference>
<dbReference type="GeneID" id="54164506"/>
<dbReference type="KEGG" id="vfi:VF_1805"/>
<dbReference type="PATRIC" id="fig|312309.11.peg.1832"/>
<dbReference type="eggNOG" id="COG0082">
    <property type="taxonomic scope" value="Bacteria"/>
</dbReference>
<dbReference type="HOGENOM" id="CLU_034547_0_2_6"/>
<dbReference type="OrthoDB" id="9771806at2"/>
<dbReference type="UniPathway" id="UPA00053">
    <property type="reaction ID" value="UER00090"/>
</dbReference>
<dbReference type="Proteomes" id="UP000000537">
    <property type="component" value="Chromosome I"/>
</dbReference>
<dbReference type="GO" id="GO:0005829">
    <property type="term" value="C:cytosol"/>
    <property type="evidence" value="ECO:0007669"/>
    <property type="project" value="TreeGrafter"/>
</dbReference>
<dbReference type="GO" id="GO:0004107">
    <property type="term" value="F:chorismate synthase activity"/>
    <property type="evidence" value="ECO:0007669"/>
    <property type="project" value="UniProtKB-UniRule"/>
</dbReference>
<dbReference type="GO" id="GO:0010181">
    <property type="term" value="F:FMN binding"/>
    <property type="evidence" value="ECO:0007669"/>
    <property type="project" value="TreeGrafter"/>
</dbReference>
<dbReference type="GO" id="GO:0008652">
    <property type="term" value="P:amino acid biosynthetic process"/>
    <property type="evidence" value="ECO:0007669"/>
    <property type="project" value="UniProtKB-KW"/>
</dbReference>
<dbReference type="GO" id="GO:0009073">
    <property type="term" value="P:aromatic amino acid family biosynthetic process"/>
    <property type="evidence" value="ECO:0007669"/>
    <property type="project" value="UniProtKB-KW"/>
</dbReference>
<dbReference type="GO" id="GO:0009423">
    <property type="term" value="P:chorismate biosynthetic process"/>
    <property type="evidence" value="ECO:0007669"/>
    <property type="project" value="UniProtKB-UniRule"/>
</dbReference>
<dbReference type="CDD" id="cd07304">
    <property type="entry name" value="Chorismate_synthase"/>
    <property type="match status" value="1"/>
</dbReference>
<dbReference type="FunFam" id="3.60.150.10:FF:000001">
    <property type="entry name" value="Chorismate synthase"/>
    <property type="match status" value="1"/>
</dbReference>
<dbReference type="Gene3D" id="3.60.150.10">
    <property type="entry name" value="Chorismate synthase AroC"/>
    <property type="match status" value="1"/>
</dbReference>
<dbReference type="HAMAP" id="MF_00300">
    <property type="entry name" value="Chorismate_synth"/>
    <property type="match status" value="1"/>
</dbReference>
<dbReference type="InterPro" id="IPR000453">
    <property type="entry name" value="Chorismate_synth"/>
</dbReference>
<dbReference type="InterPro" id="IPR035904">
    <property type="entry name" value="Chorismate_synth_AroC_sf"/>
</dbReference>
<dbReference type="InterPro" id="IPR020541">
    <property type="entry name" value="Chorismate_synthase_CS"/>
</dbReference>
<dbReference type="NCBIfam" id="TIGR00033">
    <property type="entry name" value="aroC"/>
    <property type="match status" value="1"/>
</dbReference>
<dbReference type="NCBIfam" id="NF003793">
    <property type="entry name" value="PRK05382.1"/>
    <property type="match status" value="1"/>
</dbReference>
<dbReference type="PANTHER" id="PTHR21085">
    <property type="entry name" value="CHORISMATE SYNTHASE"/>
    <property type="match status" value="1"/>
</dbReference>
<dbReference type="PANTHER" id="PTHR21085:SF0">
    <property type="entry name" value="CHORISMATE SYNTHASE"/>
    <property type="match status" value="1"/>
</dbReference>
<dbReference type="Pfam" id="PF01264">
    <property type="entry name" value="Chorismate_synt"/>
    <property type="match status" value="1"/>
</dbReference>
<dbReference type="PIRSF" id="PIRSF001456">
    <property type="entry name" value="Chorismate_synth"/>
    <property type="match status" value="1"/>
</dbReference>
<dbReference type="SUPFAM" id="SSF103263">
    <property type="entry name" value="Chorismate synthase, AroC"/>
    <property type="match status" value="1"/>
</dbReference>
<dbReference type="PROSITE" id="PS00787">
    <property type="entry name" value="CHORISMATE_SYNTHASE_1"/>
    <property type="match status" value="1"/>
</dbReference>
<dbReference type="PROSITE" id="PS00788">
    <property type="entry name" value="CHORISMATE_SYNTHASE_2"/>
    <property type="match status" value="1"/>
</dbReference>
<dbReference type="PROSITE" id="PS00789">
    <property type="entry name" value="CHORISMATE_SYNTHASE_3"/>
    <property type="match status" value="1"/>
</dbReference>
<comment type="function">
    <text evidence="1">Catalyzes the anti-1,4-elimination of the C-3 phosphate and the C-6 proR hydrogen from 5-enolpyruvylshikimate-3-phosphate (EPSP) to yield chorismate, which is the branch point compound that serves as the starting substrate for the three terminal pathways of aromatic amino acid biosynthesis. This reaction introduces a second double bond into the aromatic ring system.</text>
</comment>
<comment type="catalytic activity">
    <reaction evidence="1">
        <text>5-O-(1-carboxyvinyl)-3-phosphoshikimate = chorismate + phosphate</text>
        <dbReference type="Rhea" id="RHEA:21020"/>
        <dbReference type="ChEBI" id="CHEBI:29748"/>
        <dbReference type="ChEBI" id="CHEBI:43474"/>
        <dbReference type="ChEBI" id="CHEBI:57701"/>
        <dbReference type="EC" id="4.2.3.5"/>
    </reaction>
</comment>
<comment type="cofactor">
    <cofactor evidence="1">
        <name>FMNH2</name>
        <dbReference type="ChEBI" id="CHEBI:57618"/>
    </cofactor>
    <text evidence="1">Reduced FMN (FMNH(2)).</text>
</comment>
<comment type="pathway">
    <text evidence="1">Metabolic intermediate biosynthesis; chorismate biosynthesis; chorismate from D-erythrose 4-phosphate and phosphoenolpyruvate: step 7/7.</text>
</comment>
<comment type="subunit">
    <text evidence="1">Homotetramer.</text>
</comment>
<comment type="similarity">
    <text evidence="1">Belongs to the chorismate synthase family.</text>
</comment>
<gene>
    <name evidence="1" type="primary">aroC</name>
    <name type="ordered locus">VF_1805</name>
</gene>